<keyword id="KW-0963">Cytoplasm</keyword>
<keyword id="KW-0255">Endonuclease</keyword>
<keyword id="KW-0378">Hydrolase</keyword>
<keyword id="KW-0464">Manganese</keyword>
<keyword id="KW-0479">Metal-binding</keyword>
<keyword id="KW-0540">Nuclease</keyword>
<name>RNH2_PROM3</name>
<dbReference type="EC" id="3.1.26.4" evidence="1"/>
<dbReference type="EMBL" id="CP000554">
    <property type="protein sequence ID" value="ABM79104.1"/>
    <property type="molecule type" value="Genomic_DNA"/>
</dbReference>
<dbReference type="RefSeq" id="WP_011826963.1">
    <property type="nucleotide sequence ID" value="NC_008820.1"/>
</dbReference>
<dbReference type="SMR" id="A2CC94"/>
<dbReference type="STRING" id="59922.P9303_23711"/>
<dbReference type="KEGG" id="pmf:P9303_23711"/>
<dbReference type="HOGENOM" id="CLU_036532_3_1_3"/>
<dbReference type="BioCyc" id="PMAR59922:G1G80-2084-MONOMER"/>
<dbReference type="Proteomes" id="UP000002274">
    <property type="component" value="Chromosome"/>
</dbReference>
<dbReference type="GO" id="GO:0005737">
    <property type="term" value="C:cytoplasm"/>
    <property type="evidence" value="ECO:0007669"/>
    <property type="project" value="UniProtKB-SubCell"/>
</dbReference>
<dbReference type="GO" id="GO:0032299">
    <property type="term" value="C:ribonuclease H2 complex"/>
    <property type="evidence" value="ECO:0007669"/>
    <property type="project" value="TreeGrafter"/>
</dbReference>
<dbReference type="GO" id="GO:0030145">
    <property type="term" value="F:manganese ion binding"/>
    <property type="evidence" value="ECO:0007669"/>
    <property type="project" value="UniProtKB-UniRule"/>
</dbReference>
<dbReference type="GO" id="GO:0003723">
    <property type="term" value="F:RNA binding"/>
    <property type="evidence" value="ECO:0007669"/>
    <property type="project" value="InterPro"/>
</dbReference>
<dbReference type="GO" id="GO:0004523">
    <property type="term" value="F:RNA-DNA hybrid ribonuclease activity"/>
    <property type="evidence" value="ECO:0007669"/>
    <property type="project" value="UniProtKB-UniRule"/>
</dbReference>
<dbReference type="GO" id="GO:0043137">
    <property type="term" value="P:DNA replication, removal of RNA primer"/>
    <property type="evidence" value="ECO:0007669"/>
    <property type="project" value="TreeGrafter"/>
</dbReference>
<dbReference type="GO" id="GO:0006298">
    <property type="term" value="P:mismatch repair"/>
    <property type="evidence" value="ECO:0007669"/>
    <property type="project" value="TreeGrafter"/>
</dbReference>
<dbReference type="CDD" id="cd07182">
    <property type="entry name" value="RNase_HII_bacteria_HII_like"/>
    <property type="match status" value="1"/>
</dbReference>
<dbReference type="Gene3D" id="3.30.420.10">
    <property type="entry name" value="Ribonuclease H-like superfamily/Ribonuclease H"/>
    <property type="match status" value="1"/>
</dbReference>
<dbReference type="HAMAP" id="MF_00052_B">
    <property type="entry name" value="RNase_HII_B"/>
    <property type="match status" value="1"/>
</dbReference>
<dbReference type="InterPro" id="IPR022898">
    <property type="entry name" value="RNase_HII"/>
</dbReference>
<dbReference type="InterPro" id="IPR001352">
    <property type="entry name" value="RNase_HII/HIII"/>
</dbReference>
<dbReference type="InterPro" id="IPR024567">
    <property type="entry name" value="RNase_HII/HIII_dom"/>
</dbReference>
<dbReference type="InterPro" id="IPR012337">
    <property type="entry name" value="RNaseH-like_sf"/>
</dbReference>
<dbReference type="InterPro" id="IPR036397">
    <property type="entry name" value="RNaseH_sf"/>
</dbReference>
<dbReference type="NCBIfam" id="NF000595">
    <property type="entry name" value="PRK00015.1-3"/>
    <property type="match status" value="1"/>
</dbReference>
<dbReference type="NCBIfam" id="NF010537">
    <property type="entry name" value="PRK13925.1"/>
    <property type="match status" value="1"/>
</dbReference>
<dbReference type="PANTHER" id="PTHR10954">
    <property type="entry name" value="RIBONUCLEASE H2 SUBUNIT A"/>
    <property type="match status" value="1"/>
</dbReference>
<dbReference type="PANTHER" id="PTHR10954:SF18">
    <property type="entry name" value="RIBONUCLEASE HII"/>
    <property type="match status" value="1"/>
</dbReference>
<dbReference type="Pfam" id="PF01351">
    <property type="entry name" value="RNase_HII"/>
    <property type="match status" value="1"/>
</dbReference>
<dbReference type="SUPFAM" id="SSF53098">
    <property type="entry name" value="Ribonuclease H-like"/>
    <property type="match status" value="1"/>
</dbReference>
<dbReference type="PROSITE" id="PS51975">
    <property type="entry name" value="RNASE_H_2"/>
    <property type="match status" value="1"/>
</dbReference>
<feature type="chain" id="PRO_0000334938" description="Ribonuclease HII">
    <location>
        <begin position="1"/>
        <end position="200"/>
    </location>
</feature>
<feature type="domain" description="RNase H type-2" evidence="2">
    <location>
        <begin position="6"/>
        <end position="200"/>
    </location>
</feature>
<feature type="binding site" evidence="1">
    <location>
        <position position="12"/>
    </location>
    <ligand>
        <name>a divalent metal cation</name>
        <dbReference type="ChEBI" id="CHEBI:60240"/>
    </ligand>
</feature>
<feature type="binding site" evidence="1">
    <location>
        <position position="13"/>
    </location>
    <ligand>
        <name>a divalent metal cation</name>
        <dbReference type="ChEBI" id="CHEBI:60240"/>
    </ligand>
</feature>
<feature type="binding site" evidence="1">
    <location>
        <position position="108"/>
    </location>
    <ligand>
        <name>a divalent metal cation</name>
        <dbReference type="ChEBI" id="CHEBI:60240"/>
    </ligand>
</feature>
<gene>
    <name evidence="1" type="primary">rnhB</name>
    <name type="ordered locus">P9303_23711</name>
</gene>
<sequence length="200" mass="21433">MDPSAESIAGVDEVGRGCWFGPVFAGAVVLTEVAAVELLAEGLTDSKALTVRRRARLVPLIEDAATAWALGQASAREIDALGIRSATELSMLRALQRLPTPLELVLVDGVLPLRLWMGPQRTVVRGDSKCAAIAAASVLAKQARDGLIKRLASRFYGYGLERHVGYGTAIHRRALLDLGPTALHRRSFLTKLFAVHGSLT</sequence>
<protein>
    <recommendedName>
        <fullName evidence="1">Ribonuclease HII</fullName>
        <shortName evidence="1">RNase HII</shortName>
        <ecNumber evidence="1">3.1.26.4</ecNumber>
    </recommendedName>
</protein>
<reference key="1">
    <citation type="journal article" date="2007" name="PLoS Genet.">
        <title>Patterns and implications of gene gain and loss in the evolution of Prochlorococcus.</title>
        <authorList>
            <person name="Kettler G.C."/>
            <person name="Martiny A.C."/>
            <person name="Huang K."/>
            <person name="Zucker J."/>
            <person name="Coleman M.L."/>
            <person name="Rodrigue S."/>
            <person name="Chen F."/>
            <person name="Lapidus A."/>
            <person name="Ferriera S."/>
            <person name="Johnson J."/>
            <person name="Steglich C."/>
            <person name="Church G.M."/>
            <person name="Richardson P."/>
            <person name="Chisholm S.W."/>
        </authorList>
    </citation>
    <scope>NUCLEOTIDE SEQUENCE [LARGE SCALE GENOMIC DNA]</scope>
    <source>
        <strain>MIT 9303</strain>
    </source>
</reference>
<accession>A2CC94</accession>
<evidence type="ECO:0000255" key="1">
    <source>
        <dbReference type="HAMAP-Rule" id="MF_00052"/>
    </source>
</evidence>
<evidence type="ECO:0000255" key="2">
    <source>
        <dbReference type="PROSITE-ProRule" id="PRU01319"/>
    </source>
</evidence>
<proteinExistence type="inferred from homology"/>
<organism>
    <name type="scientific">Prochlorococcus marinus (strain MIT 9303)</name>
    <dbReference type="NCBI Taxonomy" id="59922"/>
    <lineage>
        <taxon>Bacteria</taxon>
        <taxon>Bacillati</taxon>
        <taxon>Cyanobacteriota</taxon>
        <taxon>Cyanophyceae</taxon>
        <taxon>Synechococcales</taxon>
        <taxon>Prochlorococcaceae</taxon>
        <taxon>Prochlorococcus</taxon>
    </lineage>
</organism>
<comment type="function">
    <text evidence="1">Endonuclease that specifically degrades the RNA of RNA-DNA hybrids.</text>
</comment>
<comment type="catalytic activity">
    <reaction evidence="1">
        <text>Endonucleolytic cleavage to 5'-phosphomonoester.</text>
        <dbReference type="EC" id="3.1.26.4"/>
    </reaction>
</comment>
<comment type="cofactor">
    <cofactor evidence="1">
        <name>Mn(2+)</name>
        <dbReference type="ChEBI" id="CHEBI:29035"/>
    </cofactor>
    <cofactor evidence="1">
        <name>Mg(2+)</name>
        <dbReference type="ChEBI" id="CHEBI:18420"/>
    </cofactor>
    <text evidence="1">Manganese or magnesium. Binds 1 divalent metal ion per monomer in the absence of substrate. May bind a second metal ion after substrate binding.</text>
</comment>
<comment type="subcellular location">
    <subcellularLocation>
        <location evidence="1">Cytoplasm</location>
    </subcellularLocation>
</comment>
<comment type="similarity">
    <text evidence="1">Belongs to the RNase HII family.</text>
</comment>